<accession>Q5LIX0</accession>
<dbReference type="EC" id="3.6.4.-" evidence="1"/>
<dbReference type="EMBL" id="CR626927">
    <property type="protein sequence ID" value="CAH05906.1"/>
    <property type="molecule type" value="Genomic_DNA"/>
</dbReference>
<dbReference type="RefSeq" id="WP_005783731.1">
    <property type="nucleotide sequence ID" value="NZ_UFTH01000001.1"/>
</dbReference>
<dbReference type="SMR" id="Q5LIX0"/>
<dbReference type="PaxDb" id="272559-BF9343_0127"/>
<dbReference type="GeneID" id="60368686"/>
<dbReference type="KEGG" id="bfs:BF9343_0127"/>
<dbReference type="eggNOG" id="COG2255">
    <property type="taxonomic scope" value="Bacteria"/>
</dbReference>
<dbReference type="HOGENOM" id="CLU_055599_1_0_10"/>
<dbReference type="Proteomes" id="UP000006731">
    <property type="component" value="Chromosome"/>
</dbReference>
<dbReference type="GO" id="GO:0005737">
    <property type="term" value="C:cytoplasm"/>
    <property type="evidence" value="ECO:0007669"/>
    <property type="project" value="UniProtKB-SubCell"/>
</dbReference>
<dbReference type="GO" id="GO:0048476">
    <property type="term" value="C:Holliday junction resolvase complex"/>
    <property type="evidence" value="ECO:0007669"/>
    <property type="project" value="UniProtKB-UniRule"/>
</dbReference>
<dbReference type="GO" id="GO:0005524">
    <property type="term" value="F:ATP binding"/>
    <property type="evidence" value="ECO:0007669"/>
    <property type="project" value="UniProtKB-UniRule"/>
</dbReference>
<dbReference type="GO" id="GO:0016887">
    <property type="term" value="F:ATP hydrolysis activity"/>
    <property type="evidence" value="ECO:0007669"/>
    <property type="project" value="InterPro"/>
</dbReference>
<dbReference type="GO" id="GO:0000400">
    <property type="term" value="F:four-way junction DNA binding"/>
    <property type="evidence" value="ECO:0007669"/>
    <property type="project" value="UniProtKB-UniRule"/>
</dbReference>
<dbReference type="GO" id="GO:0009378">
    <property type="term" value="F:four-way junction helicase activity"/>
    <property type="evidence" value="ECO:0007669"/>
    <property type="project" value="InterPro"/>
</dbReference>
<dbReference type="GO" id="GO:0006310">
    <property type="term" value="P:DNA recombination"/>
    <property type="evidence" value="ECO:0007669"/>
    <property type="project" value="UniProtKB-UniRule"/>
</dbReference>
<dbReference type="GO" id="GO:0006281">
    <property type="term" value="P:DNA repair"/>
    <property type="evidence" value="ECO:0007669"/>
    <property type="project" value="UniProtKB-UniRule"/>
</dbReference>
<dbReference type="CDD" id="cd00009">
    <property type="entry name" value="AAA"/>
    <property type="match status" value="1"/>
</dbReference>
<dbReference type="Gene3D" id="1.10.8.60">
    <property type="match status" value="1"/>
</dbReference>
<dbReference type="Gene3D" id="3.40.50.300">
    <property type="entry name" value="P-loop containing nucleotide triphosphate hydrolases"/>
    <property type="match status" value="1"/>
</dbReference>
<dbReference type="Gene3D" id="1.10.10.10">
    <property type="entry name" value="Winged helix-like DNA-binding domain superfamily/Winged helix DNA-binding domain"/>
    <property type="match status" value="1"/>
</dbReference>
<dbReference type="HAMAP" id="MF_00016">
    <property type="entry name" value="DNA_HJ_migration_RuvB"/>
    <property type="match status" value="1"/>
</dbReference>
<dbReference type="InterPro" id="IPR003593">
    <property type="entry name" value="AAA+_ATPase"/>
</dbReference>
<dbReference type="InterPro" id="IPR041445">
    <property type="entry name" value="AAA_lid_4"/>
</dbReference>
<dbReference type="InterPro" id="IPR004605">
    <property type="entry name" value="DNA_helicase_Holl-junc_RuvB"/>
</dbReference>
<dbReference type="InterPro" id="IPR027417">
    <property type="entry name" value="P-loop_NTPase"/>
</dbReference>
<dbReference type="InterPro" id="IPR008824">
    <property type="entry name" value="RuvB-like_N"/>
</dbReference>
<dbReference type="InterPro" id="IPR008823">
    <property type="entry name" value="RuvB_C"/>
</dbReference>
<dbReference type="InterPro" id="IPR036388">
    <property type="entry name" value="WH-like_DNA-bd_sf"/>
</dbReference>
<dbReference type="InterPro" id="IPR036390">
    <property type="entry name" value="WH_DNA-bd_sf"/>
</dbReference>
<dbReference type="NCBIfam" id="NF000868">
    <property type="entry name" value="PRK00080.1"/>
    <property type="match status" value="1"/>
</dbReference>
<dbReference type="NCBIfam" id="TIGR00635">
    <property type="entry name" value="ruvB"/>
    <property type="match status" value="1"/>
</dbReference>
<dbReference type="PANTHER" id="PTHR42848">
    <property type="match status" value="1"/>
</dbReference>
<dbReference type="PANTHER" id="PTHR42848:SF1">
    <property type="entry name" value="HOLLIDAY JUNCTION BRANCH MIGRATION COMPLEX SUBUNIT RUVB"/>
    <property type="match status" value="1"/>
</dbReference>
<dbReference type="Pfam" id="PF17864">
    <property type="entry name" value="AAA_lid_4"/>
    <property type="match status" value="1"/>
</dbReference>
<dbReference type="Pfam" id="PF05491">
    <property type="entry name" value="RuvB_C"/>
    <property type="match status" value="1"/>
</dbReference>
<dbReference type="Pfam" id="PF05496">
    <property type="entry name" value="RuvB_N"/>
    <property type="match status" value="1"/>
</dbReference>
<dbReference type="SMART" id="SM00382">
    <property type="entry name" value="AAA"/>
    <property type="match status" value="1"/>
</dbReference>
<dbReference type="SUPFAM" id="SSF52540">
    <property type="entry name" value="P-loop containing nucleoside triphosphate hydrolases"/>
    <property type="match status" value="1"/>
</dbReference>
<dbReference type="SUPFAM" id="SSF46785">
    <property type="entry name" value="Winged helix' DNA-binding domain"/>
    <property type="match status" value="1"/>
</dbReference>
<evidence type="ECO:0000255" key="1">
    <source>
        <dbReference type="HAMAP-Rule" id="MF_00016"/>
    </source>
</evidence>
<gene>
    <name evidence="1" type="primary">ruvB</name>
    <name type="ordered locus">BF0128</name>
</gene>
<name>RUVB_BACFN</name>
<comment type="function">
    <text evidence="1">The RuvA-RuvB-RuvC complex processes Holliday junction (HJ) DNA during genetic recombination and DNA repair, while the RuvA-RuvB complex plays an important role in the rescue of blocked DNA replication forks via replication fork reversal (RFR). RuvA specifically binds to HJ cruciform DNA, conferring on it an open structure. The RuvB hexamer acts as an ATP-dependent pump, pulling dsDNA into and through the RuvAB complex. RuvB forms 2 homohexamers on either side of HJ DNA bound by 1 or 2 RuvA tetramers; 4 subunits per hexamer contact DNA at a time. Coordinated motions by a converter formed by DNA-disengaged RuvB subunits stimulates ATP hydrolysis and nucleotide exchange. Immobilization of the converter enables RuvB to convert the ATP-contained energy into a lever motion, pulling 2 nucleotides of DNA out of the RuvA tetramer per ATP hydrolyzed, thus driving DNA branch migration. The RuvB motors rotate together with the DNA substrate, which together with the progressing nucleotide cycle form the mechanistic basis for DNA recombination by continuous HJ branch migration. Branch migration allows RuvC to scan DNA until it finds its consensus sequence, where it cleaves and resolves cruciform DNA.</text>
</comment>
<comment type="catalytic activity">
    <reaction evidence="1">
        <text>ATP + H2O = ADP + phosphate + H(+)</text>
        <dbReference type="Rhea" id="RHEA:13065"/>
        <dbReference type="ChEBI" id="CHEBI:15377"/>
        <dbReference type="ChEBI" id="CHEBI:15378"/>
        <dbReference type="ChEBI" id="CHEBI:30616"/>
        <dbReference type="ChEBI" id="CHEBI:43474"/>
        <dbReference type="ChEBI" id="CHEBI:456216"/>
    </reaction>
</comment>
<comment type="subunit">
    <text evidence="1">Homohexamer. Forms an RuvA(8)-RuvB(12)-Holliday junction (HJ) complex. HJ DNA is sandwiched between 2 RuvA tetramers; dsDNA enters through RuvA and exits via RuvB. An RuvB hexamer assembles on each DNA strand where it exits the tetramer. Each RuvB hexamer is contacted by two RuvA subunits (via domain III) on 2 adjacent RuvB subunits; this complex drives branch migration. In the full resolvosome a probable DNA-RuvA(4)-RuvB(12)-RuvC(2) complex forms which resolves the HJ.</text>
</comment>
<comment type="subcellular location">
    <subcellularLocation>
        <location evidence="1">Cytoplasm</location>
    </subcellularLocation>
</comment>
<comment type="domain">
    <text evidence="1">Has 3 domains, the large (RuvB-L) and small ATPase (RuvB-S) domains and the C-terminal head (RuvB-H) domain. The head domain binds DNA, while the ATPase domains jointly bind ATP, ADP or are empty depending on the state of the subunit in the translocation cycle. During a single DNA translocation step the structure of each domain remains the same, but their relative positions change.</text>
</comment>
<comment type="similarity">
    <text evidence="1">Belongs to the RuvB family.</text>
</comment>
<keyword id="KW-0067">ATP-binding</keyword>
<keyword id="KW-0963">Cytoplasm</keyword>
<keyword id="KW-0227">DNA damage</keyword>
<keyword id="KW-0233">DNA recombination</keyword>
<keyword id="KW-0234">DNA repair</keyword>
<keyword id="KW-0238">DNA-binding</keyword>
<keyword id="KW-0378">Hydrolase</keyword>
<keyword id="KW-0547">Nucleotide-binding</keyword>
<sequence length="342" mass="37792">MEEDFNIRDHQLTSRERDFENALRPLSFEDFNGQDKVVDNLRIFVKAARLRAEALDHVLLHGPPGLGKTTLSNIIANELGVGFKVTSGPVLDKPGDLAGVLTSLEPNDVLFIDEIHRLSPVVEEYLYSAMEDYRIDIMIDKGPSARSIQIDLNPFTLVGATTRSGLLTAPLRARFGINLHLEYYDDDILSNIISRSAGILDVPCSSQAAGEIASRSRGTPRIANALLRRVRDFAQVKGSGSIDTEIANYALEALNIDKYGLDEIDNKILCTIIDKFKGGPVGLTTIATALGEDAGTIEEVYEPFLIKEGFLKRTPRGREVTELAYKHLGRSLYNSQKTLFND</sequence>
<feature type="chain" id="PRO_0000235349" description="Holliday junction branch migration complex subunit RuvB">
    <location>
        <begin position="1"/>
        <end position="342"/>
    </location>
</feature>
<feature type="region of interest" description="Large ATPase domain (RuvB-L)" evidence="1">
    <location>
        <begin position="1"/>
        <end position="184"/>
    </location>
</feature>
<feature type="region of interest" description="Small ATPAse domain (RuvB-S)" evidence="1">
    <location>
        <begin position="185"/>
        <end position="255"/>
    </location>
</feature>
<feature type="region of interest" description="Head domain (RuvB-H)" evidence="1">
    <location>
        <begin position="258"/>
        <end position="342"/>
    </location>
</feature>
<feature type="binding site" evidence="1">
    <location>
        <position position="23"/>
    </location>
    <ligand>
        <name>ATP</name>
        <dbReference type="ChEBI" id="CHEBI:30616"/>
    </ligand>
</feature>
<feature type="binding site" evidence="1">
    <location>
        <position position="24"/>
    </location>
    <ligand>
        <name>ATP</name>
        <dbReference type="ChEBI" id="CHEBI:30616"/>
    </ligand>
</feature>
<feature type="binding site" evidence="1">
    <location>
        <position position="65"/>
    </location>
    <ligand>
        <name>ATP</name>
        <dbReference type="ChEBI" id="CHEBI:30616"/>
    </ligand>
</feature>
<feature type="binding site" evidence="1">
    <location>
        <position position="68"/>
    </location>
    <ligand>
        <name>ATP</name>
        <dbReference type="ChEBI" id="CHEBI:30616"/>
    </ligand>
</feature>
<feature type="binding site" evidence="1">
    <location>
        <position position="69"/>
    </location>
    <ligand>
        <name>ATP</name>
        <dbReference type="ChEBI" id="CHEBI:30616"/>
    </ligand>
</feature>
<feature type="binding site" evidence="1">
    <location>
        <position position="69"/>
    </location>
    <ligand>
        <name>Mg(2+)</name>
        <dbReference type="ChEBI" id="CHEBI:18420"/>
    </ligand>
</feature>
<feature type="binding site" evidence="1">
    <location>
        <position position="70"/>
    </location>
    <ligand>
        <name>ATP</name>
        <dbReference type="ChEBI" id="CHEBI:30616"/>
    </ligand>
</feature>
<feature type="binding site" evidence="1">
    <location>
        <begin position="131"/>
        <end position="133"/>
    </location>
    <ligand>
        <name>ATP</name>
        <dbReference type="ChEBI" id="CHEBI:30616"/>
    </ligand>
</feature>
<feature type="binding site" evidence="1">
    <location>
        <position position="174"/>
    </location>
    <ligand>
        <name>ATP</name>
        <dbReference type="ChEBI" id="CHEBI:30616"/>
    </ligand>
</feature>
<feature type="binding site" evidence="1">
    <location>
        <position position="184"/>
    </location>
    <ligand>
        <name>ATP</name>
        <dbReference type="ChEBI" id="CHEBI:30616"/>
    </ligand>
</feature>
<feature type="binding site" evidence="1">
    <location>
        <position position="221"/>
    </location>
    <ligand>
        <name>ATP</name>
        <dbReference type="ChEBI" id="CHEBI:30616"/>
    </ligand>
</feature>
<feature type="binding site" evidence="1">
    <location>
        <position position="313"/>
    </location>
    <ligand>
        <name>DNA</name>
        <dbReference type="ChEBI" id="CHEBI:16991"/>
    </ligand>
</feature>
<feature type="binding site" evidence="1">
    <location>
        <position position="318"/>
    </location>
    <ligand>
        <name>DNA</name>
        <dbReference type="ChEBI" id="CHEBI:16991"/>
    </ligand>
</feature>
<reference key="1">
    <citation type="journal article" date="2005" name="Science">
        <title>Extensive DNA inversions in the B. fragilis genome control variable gene expression.</title>
        <authorList>
            <person name="Cerdeno-Tarraga A.-M."/>
            <person name="Patrick S."/>
            <person name="Crossman L.C."/>
            <person name="Blakely G."/>
            <person name="Abratt V."/>
            <person name="Lennard N."/>
            <person name="Poxton I."/>
            <person name="Duerden B."/>
            <person name="Harris B."/>
            <person name="Quail M.A."/>
            <person name="Barron A."/>
            <person name="Clark L."/>
            <person name="Corton C."/>
            <person name="Doggett J."/>
            <person name="Holden M.T.G."/>
            <person name="Larke N."/>
            <person name="Line A."/>
            <person name="Lord A."/>
            <person name="Norbertczak H."/>
            <person name="Ormond D."/>
            <person name="Price C."/>
            <person name="Rabbinowitsch E."/>
            <person name="Woodward J."/>
            <person name="Barrell B.G."/>
            <person name="Parkhill J."/>
        </authorList>
    </citation>
    <scope>NUCLEOTIDE SEQUENCE [LARGE SCALE GENOMIC DNA]</scope>
    <source>
        <strain>ATCC 25285 / DSM 2151 / CCUG 4856 / JCM 11019 / LMG 10263 / NCTC 9343 / Onslow / VPI 2553 / EN-2</strain>
    </source>
</reference>
<protein>
    <recommendedName>
        <fullName evidence="1">Holliday junction branch migration complex subunit RuvB</fullName>
        <ecNumber evidence="1">3.6.4.-</ecNumber>
    </recommendedName>
</protein>
<organism>
    <name type="scientific">Bacteroides fragilis (strain ATCC 25285 / DSM 2151 / CCUG 4856 / JCM 11019 / LMG 10263 / NCTC 9343 / Onslow / VPI 2553 / EN-2)</name>
    <dbReference type="NCBI Taxonomy" id="272559"/>
    <lineage>
        <taxon>Bacteria</taxon>
        <taxon>Pseudomonadati</taxon>
        <taxon>Bacteroidota</taxon>
        <taxon>Bacteroidia</taxon>
        <taxon>Bacteroidales</taxon>
        <taxon>Bacteroidaceae</taxon>
        <taxon>Bacteroides</taxon>
    </lineage>
</organism>
<proteinExistence type="inferred from homology"/>